<comment type="function">
    <text evidence="1">Located on the platform of the 30S subunit.</text>
</comment>
<comment type="subunit">
    <text evidence="1 3">Part of the 30S ribosomal subunit.</text>
</comment>
<comment type="similarity">
    <text evidence="1">Belongs to the universal ribosomal protein uS11 family.</text>
</comment>
<accession>Q5JJF3</accession>
<keyword id="KW-0002">3D-structure</keyword>
<keyword id="KW-1185">Reference proteome</keyword>
<keyword id="KW-0687">Ribonucleoprotein</keyword>
<keyword id="KW-0689">Ribosomal protein</keyword>
<keyword id="KW-0694">RNA-binding</keyword>
<keyword id="KW-0699">rRNA-binding</keyword>
<gene>
    <name evidence="1" type="primary">rps11</name>
    <name type="ordered locus">TK1504</name>
</gene>
<dbReference type="EMBL" id="AP006878">
    <property type="protein sequence ID" value="BAD85693.1"/>
    <property type="molecule type" value="Genomic_DNA"/>
</dbReference>
<dbReference type="RefSeq" id="WP_011250455.1">
    <property type="nucleotide sequence ID" value="NC_006624.1"/>
</dbReference>
<dbReference type="PDB" id="6SKF">
    <property type="method" value="EM"/>
    <property type="resolution" value="2.95 A"/>
    <property type="chains" value="An=1-140"/>
</dbReference>
<dbReference type="PDB" id="6SKG">
    <property type="method" value="EM"/>
    <property type="resolution" value="2.65 A"/>
    <property type="chains" value="An=1-140"/>
</dbReference>
<dbReference type="PDB" id="6TH6">
    <property type="method" value="EM"/>
    <property type="resolution" value="2.55 A"/>
    <property type="chains" value="An=1-140"/>
</dbReference>
<dbReference type="PDBsum" id="6SKF"/>
<dbReference type="PDBsum" id="6SKG"/>
<dbReference type="PDBsum" id="6TH6"/>
<dbReference type="EMDB" id="EMD-10223"/>
<dbReference type="EMDB" id="EMD-10224"/>
<dbReference type="EMDB" id="EMD-10503"/>
<dbReference type="SMR" id="Q5JJF3"/>
<dbReference type="FunCoup" id="Q5JJF3">
    <property type="interactions" value="155"/>
</dbReference>
<dbReference type="IntAct" id="Q5JJF3">
    <property type="interactions" value="1"/>
</dbReference>
<dbReference type="MINT" id="Q5JJF3"/>
<dbReference type="STRING" id="69014.TK1504"/>
<dbReference type="EnsemblBacteria" id="BAD85693">
    <property type="protein sequence ID" value="BAD85693"/>
    <property type="gene ID" value="TK1504"/>
</dbReference>
<dbReference type="GeneID" id="78448031"/>
<dbReference type="KEGG" id="tko:TK1504"/>
<dbReference type="PATRIC" id="fig|69014.16.peg.1464"/>
<dbReference type="eggNOG" id="arCOG04240">
    <property type="taxonomic scope" value="Archaea"/>
</dbReference>
<dbReference type="HOGENOM" id="CLU_072439_6_1_2"/>
<dbReference type="InParanoid" id="Q5JJF3"/>
<dbReference type="OrthoDB" id="12054at2157"/>
<dbReference type="PhylomeDB" id="Q5JJF3"/>
<dbReference type="Proteomes" id="UP000000536">
    <property type="component" value="Chromosome"/>
</dbReference>
<dbReference type="GO" id="GO:0022627">
    <property type="term" value="C:cytosolic small ribosomal subunit"/>
    <property type="evidence" value="ECO:0000318"/>
    <property type="project" value="GO_Central"/>
</dbReference>
<dbReference type="GO" id="GO:0019843">
    <property type="term" value="F:rRNA binding"/>
    <property type="evidence" value="ECO:0007669"/>
    <property type="project" value="UniProtKB-UniRule"/>
</dbReference>
<dbReference type="GO" id="GO:0003735">
    <property type="term" value="F:structural constituent of ribosome"/>
    <property type="evidence" value="ECO:0000318"/>
    <property type="project" value="GO_Central"/>
</dbReference>
<dbReference type="GO" id="GO:0006412">
    <property type="term" value="P:translation"/>
    <property type="evidence" value="ECO:0000318"/>
    <property type="project" value="GO_Central"/>
</dbReference>
<dbReference type="FunFam" id="3.30.420.80:FF:000007">
    <property type="entry name" value="30S ribosomal protein S11"/>
    <property type="match status" value="1"/>
</dbReference>
<dbReference type="Gene3D" id="3.30.420.80">
    <property type="entry name" value="Ribosomal protein S11"/>
    <property type="match status" value="1"/>
</dbReference>
<dbReference type="HAMAP" id="MF_01310">
    <property type="entry name" value="Ribosomal_uS11"/>
    <property type="match status" value="1"/>
</dbReference>
<dbReference type="InterPro" id="IPR001971">
    <property type="entry name" value="Ribosomal_uS11"/>
</dbReference>
<dbReference type="InterPro" id="IPR019961">
    <property type="entry name" value="Ribosomal_uS11_archaeal"/>
</dbReference>
<dbReference type="InterPro" id="IPR018102">
    <property type="entry name" value="Ribosomal_uS11_CS"/>
</dbReference>
<dbReference type="InterPro" id="IPR036967">
    <property type="entry name" value="Ribosomal_uS11_sf"/>
</dbReference>
<dbReference type="NCBIfam" id="TIGR03628">
    <property type="entry name" value="arch_S11P"/>
    <property type="match status" value="1"/>
</dbReference>
<dbReference type="NCBIfam" id="NF007176">
    <property type="entry name" value="PRK09607.1"/>
    <property type="match status" value="1"/>
</dbReference>
<dbReference type="PANTHER" id="PTHR11759">
    <property type="entry name" value="40S RIBOSOMAL PROTEIN S14/30S RIBOSOMAL PROTEIN S11"/>
    <property type="match status" value="1"/>
</dbReference>
<dbReference type="Pfam" id="PF00411">
    <property type="entry name" value="Ribosomal_S11"/>
    <property type="match status" value="1"/>
</dbReference>
<dbReference type="PIRSF" id="PIRSF002131">
    <property type="entry name" value="Ribosomal_S11"/>
    <property type="match status" value="1"/>
</dbReference>
<dbReference type="SUPFAM" id="SSF53137">
    <property type="entry name" value="Translational machinery components"/>
    <property type="match status" value="1"/>
</dbReference>
<dbReference type="PROSITE" id="PS00054">
    <property type="entry name" value="RIBOSOMAL_S11"/>
    <property type="match status" value="1"/>
</dbReference>
<organism>
    <name type="scientific">Thermococcus kodakarensis (strain ATCC BAA-918 / JCM 12380 / KOD1)</name>
    <name type="common">Pyrococcus kodakaraensis (strain KOD1)</name>
    <dbReference type="NCBI Taxonomy" id="69014"/>
    <lineage>
        <taxon>Archaea</taxon>
        <taxon>Methanobacteriati</taxon>
        <taxon>Methanobacteriota</taxon>
        <taxon>Thermococci</taxon>
        <taxon>Thermococcales</taxon>
        <taxon>Thermococcaceae</taxon>
        <taxon>Thermococcus</taxon>
    </lineage>
</organism>
<name>RS11_THEKO</name>
<protein>
    <recommendedName>
        <fullName evidence="1">Small ribosomal subunit protein uS11</fullName>
    </recommendedName>
    <alternativeName>
        <fullName evidence="4">30S ribosomal protein S11</fullName>
    </alternativeName>
</protein>
<sequence length="140" mass="15083">MSEEQTTQVNIKKKEKWGVAHIYSSYNNTIIHITDLTGAETISRWSGGMVVKADRDEPSPYAAMIAARRAAEEAMEKGITGVHIKVRAPGGSKSKSPGPGAQAAIRALSRAGLRIGRVEDVTPIPHDGTRPKGGRRGRRV</sequence>
<feature type="chain" id="PRO_0000123281" description="Small ribosomal subunit protein uS11">
    <location>
        <begin position="1"/>
        <end position="140"/>
    </location>
</feature>
<feature type="region of interest" description="Disordered" evidence="2">
    <location>
        <begin position="116"/>
        <end position="140"/>
    </location>
</feature>
<reference key="1">
    <citation type="journal article" date="2005" name="Genome Res.">
        <title>Complete genome sequence of the hyperthermophilic archaeon Thermococcus kodakaraensis KOD1 and comparison with Pyrococcus genomes.</title>
        <authorList>
            <person name="Fukui T."/>
            <person name="Atomi H."/>
            <person name="Kanai T."/>
            <person name="Matsumi R."/>
            <person name="Fujiwara S."/>
            <person name="Imanaka T."/>
        </authorList>
    </citation>
    <scope>NUCLEOTIDE SEQUENCE [LARGE SCALE GENOMIC DNA]</scope>
    <source>
        <strain>ATCC BAA-918 / JCM 12380 / KOD1</strain>
    </source>
</reference>
<reference evidence="5 6 7" key="2">
    <citation type="journal article" date="2020" name="Nature">
        <title>Dynamic RNA acetylation revealed by quantitative cross-evolutionary mapping.</title>
        <authorList>
            <person name="Sas-Chen A."/>
            <person name="Thomas J.M."/>
            <person name="Matzov D."/>
            <person name="Taoka M."/>
            <person name="Nance K.D."/>
            <person name="Nir R."/>
            <person name="Bryson K.M."/>
            <person name="Shachar R."/>
            <person name="Liman G.L.S."/>
            <person name="Burkhart B.W."/>
            <person name="Gamage S.T."/>
            <person name="Nobe Y."/>
            <person name="Briney C.A."/>
            <person name="Levy M.J."/>
            <person name="Fuchs R.T."/>
            <person name="Robb G.B."/>
            <person name="Hartmann J."/>
            <person name="Sharma S."/>
            <person name="Lin Q."/>
            <person name="Florens L."/>
            <person name="Washburn M.P."/>
            <person name="Isobe T."/>
            <person name="Santangelo T.J."/>
            <person name="Shalev-Benami M."/>
            <person name="Meier J.L."/>
            <person name="Schwartz S."/>
        </authorList>
    </citation>
    <scope>STRUCTURE BY ELECTRON MICROSCOPY (2.55 ANGSTROMS) IN 70S RIBOSOME</scope>
    <scope>SUBUNIT</scope>
    <source>
        <strain>ATCC BAA-918 / TS559</strain>
    </source>
</reference>
<evidence type="ECO:0000255" key="1">
    <source>
        <dbReference type="HAMAP-Rule" id="MF_01310"/>
    </source>
</evidence>
<evidence type="ECO:0000256" key="2">
    <source>
        <dbReference type="SAM" id="MobiDB-lite"/>
    </source>
</evidence>
<evidence type="ECO:0000269" key="3">
    <source>
    </source>
</evidence>
<evidence type="ECO:0000305" key="4"/>
<evidence type="ECO:0007744" key="5">
    <source>
        <dbReference type="PDB" id="6SKF"/>
    </source>
</evidence>
<evidence type="ECO:0007744" key="6">
    <source>
        <dbReference type="PDB" id="6SKG"/>
    </source>
</evidence>
<evidence type="ECO:0007744" key="7">
    <source>
        <dbReference type="PDB" id="6TH6"/>
    </source>
</evidence>
<proteinExistence type="evidence at protein level"/>